<comment type="function">
    <text evidence="1">Catalyzes the synthesis of the hydroxymethylpyrimidine phosphate (HMP-P) moiety of thiamine from aminoimidazole ribotide (AIR) in a radical S-adenosyl-L-methionine (SAM)-dependent reaction.</text>
</comment>
<comment type="catalytic activity">
    <reaction evidence="1">
        <text>5-amino-1-(5-phospho-beta-D-ribosyl)imidazole + S-adenosyl-L-methionine = 4-amino-2-methyl-5-(phosphooxymethyl)pyrimidine + CO + 5'-deoxyadenosine + formate + L-methionine + 3 H(+)</text>
        <dbReference type="Rhea" id="RHEA:24840"/>
        <dbReference type="ChEBI" id="CHEBI:15378"/>
        <dbReference type="ChEBI" id="CHEBI:15740"/>
        <dbReference type="ChEBI" id="CHEBI:17245"/>
        <dbReference type="ChEBI" id="CHEBI:17319"/>
        <dbReference type="ChEBI" id="CHEBI:57844"/>
        <dbReference type="ChEBI" id="CHEBI:58354"/>
        <dbReference type="ChEBI" id="CHEBI:59789"/>
        <dbReference type="ChEBI" id="CHEBI:137981"/>
        <dbReference type="EC" id="4.1.99.17"/>
    </reaction>
</comment>
<comment type="cofactor">
    <cofactor evidence="1">
        <name>[4Fe-4S] cluster</name>
        <dbReference type="ChEBI" id="CHEBI:49883"/>
    </cofactor>
    <text evidence="1">Binds 1 [4Fe-4S] cluster per subunit. The cluster is coordinated with 3 cysteines and an exchangeable S-adenosyl-L-methionine.</text>
</comment>
<comment type="pathway">
    <text evidence="1">Cofactor biosynthesis; thiamine diphosphate biosynthesis.</text>
</comment>
<comment type="similarity">
    <text evidence="1">Belongs to the ThiC family.</text>
</comment>
<gene>
    <name evidence="1" type="primary">thiC</name>
    <name type="ordered locus">MMAR_0735</name>
</gene>
<keyword id="KW-0004">4Fe-4S</keyword>
<keyword id="KW-0408">Iron</keyword>
<keyword id="KW-0411">Iron-sulfur</keyword>
<keyword id="KW-0456">Lyase</keyword>
<keyword id="KW-0479">Metal-binding</keyword>
<keyword id="KW-1185">Reference proteome</keyword>
<keyword id="KW-0949">S-adenosyl-L-methionine</keyword>
<keyword id="KW-0784">Thiamine biosynthesis</keyword>
<keyword id="KW-0862">Zinc</keyword>
<feature type="chain" id="PRO_1000093216" description="Phosphomethylpyrimidine synthase">
    <location>
        <begin position="1"/>
        <end position="546"/>
    </location>
</feature>
<feature type="binding site" evidence="1">
    <location>
        <position position="145"/>
    </location>
    <ligand>
        <name>substrate</name>
    </ligand>
</feature>
<feature type="binding site" evidence="1">
    <location>
        <position position="174"/>
    </location>
    <ligand>
        <name>substrate</name>
    </ligand>
</feature>
<feature type="binding site" evidence="1">
    <location>
        <position position="203"/>
    </location>
    <ligand>
        <name>substrate</name>
    </ligand>
</feature>
<feature type="binding site" evidence="1">
    <location>
        <position position="239"/>
    </location>
    <ligand>
        <name>substrate</name>
    </ligand>
</feature>
<feature type="binding site" evidence="1">
    <location>
        <begin position="259"/>
        <end position="261"/>
    </location>
    <ligand>
        <name>substrate</name>
    </ligand>
</feature>
<feature type="binding site" evidence="1">
    <location>
        <begin position="300"/>
        <end position="303"/>
    </location>
    <ligand>
        <name>substrate</name>
    </ligand>
</feature>
<feature type="binding site" evidence="1">
    <location>
        <position position="339"/>
    </location>
    <ligand>
        <name>substrate</name>
    </ligand>
</feature>
<feature type="binding site" evidence="1">
    <location>
        <position position="343"/>
    </location>
    <ligand>
        <name>Zn(2+)</name>
        <dbReference type="ChEBI" id="CHEBI:29105"/>
    </ligand>
</feature>
<feature type="binding site" evidence="1">
    <location>
        <position position="366"/>
    </location>
    <ligand>
        <name>substrate</name>
    </ligand>
</feature>
<feature type="binding site" evidence="1">
    <location>
        <position position="407"/>
    </location>
    <ligand>
        <name>Zn(2+)</name>
        <dbReference type="ChEBI" id="CHEBI:29105"/>
    </ligand>
</feature>
<feature type="binding site" evidence="1">
    <location>
        <position position="487"/>
    </location>
    <ligand>
        <name>[4Fe-4S] cluster</name>
        <dbReference type="ChEBI" id="CHEBI:49883"/>
        <note>4Fe-4S-S-AdoMet</note>
    </ligand>
</feature>
<feature type="binding site" evidence="1">
    <location>
        <position position="490"/>
    </location>
    <ligand>
        <name>[4Fe-4S] cluster</name>
        <dbReference type="ChEBI" id="CHEBI:49883"/>
        <note>4Fe-4S-S-AdoMet</note>
    </ligand>
</feature>
<feature type="binding site" evidence="1">
    <location>
        <position position="495"/>
    </location>
    <ligand>
        <name>[4Fe-4S] cluster</name>
        <dbReference type="ChEBI" id="CHEBI:49883"/>
        <note>4Fe-4S-S-AdoMet</note>
    </ligand>
</feature>
<sequence length="546" mass="59418">MTVTVEPSITTGPIAGSSKAYREVAGPDGVTLRVPLRRVHLSTGADFDLYDTSGPYTDPNAVIDLAVGLPARPGLVRDRGTQLQRARAGEITAEMAFIAAREGMSAELVRDEVALGRAVIPANHNHPESEPMVIGKAFAVKVNANIGNSAVTSSIAEEVDKMVWATRWGADTIMDLSTGKNIHETREWILRNSPVPVGTVPIYQALEKVKGDPTELTWELYRDTVIEQCEQGVDYMTVHAGVLLRYVPLTAKRVTGIVSRGGSIMAAWCLAHHRESFLYTNFEELCDILARYDVTFSLGDGLRPGSIADANDAAQFAELRTLGELTKIAKAHGVQVMIEGPGHVPMHKIVENVRLEEELCEEAPFYTLGPLATDIAPAYDHITSAIGAAIIAQAGTAMLCYVTPKEHLGLPDRKDVKDGVIAYKIAAHAGDLAKGHPHAQERDNALSQARFEFRWNDQFALSLDPDTAREYHDETLPAEPAKTAHFCSMCGPKFCSMRITQDVRDYAAKHGLDSEEAIEAALEAGMAEKSAEFADHGNRVYLPITQ</sequence>
<evidence type="ECO:0000255" key="1">
    <source>
        <dbReference type="HAMAP-Rule" id="MF_00089"/>
    </source>
</evidence>
<proteinExistence type="inferred from homology"/>
<name>THIC_MYCMM</name>
<protein>
    <recommendedName>
        <fullName evidence="1">Phosphomethylpyrimidine synthase</fullName>
        <ecNumber evidence="1">4.1.99.17</ecNumber>
    </recommendedName>
    <alternativeName>
        <fullName evidence="1">Hydroxymethylpyrimidine phosphate synthase</fullName>
        <shortName evidence="1">HMP-P synthase</shortName>
        <shortName evidence="1">HMP-phosphate synthase</shortName>
        <shortName evidence="1">HMPP synthase</shortName>
    </alternativeName>
    <alternativeName>
        <fullName evidence="1">Thiamine biosynthesis protein ThiC</fullName>
    </alternativeName>
</protein>
<organism>
    <name type="scientific">Mycobacterium marinum (strain ATCC BAA-535 / M)</name>
    <dbReference type="NCBI Taxonomy" id="216594"/>
    <lineage>
        <taxon>Bacteria</taxon>
        <taxon>Bacillati</taxon>
        <taxon>Actinomycetota</taxon>
        <taxon>Actinomycetes</taxon>
        <taxon>Mycobacteriales</taxon>
        <taxon>Mycobacteriaceae</taxon>
        <taxon>Mycobacterium</taxon>
        <taxon>Mycobacterium ulcerans group</taxon>
    </lineage>
</organism>
<accession>B2HQM5</accession>
<reference key="1">
    <citation type="journal article" date="2008" name="Genome Res.">
        <title>Insights from the complete genome sequence of Mycobacterium marinum on the evolution of Mycobacterium tuberculosis.</title>
        <authorList>
            <person name="Stinear T.P."/>
            <person name="Seemann T."/>
            <person name="Harrison P.F."/>
            <person name="Jenkin G.A."/>
            <person name="Davies J.K."/>
            <person name="Johnson P.D."/>
            <person name="Abdellah Z."/>
            <person name="Arrowsmith C."/>
            <person name="Chillingworth T."/>
            <person name="Churcher C."/>
            <person name="Clarke K."/>
            <person name="Cronin A."/>
            <person name="Davis P."/>
            <person name="Goodhead I."/>
            <person name="Holroyd N."/>
            <person name="Jagels K."/>
            <person name="Lord A."/>
            <person name="Moule S."/>
            <person name="Mungall K."/>
            <person name="Norbertczak H."/>
            <person name="Quail M.A."/>
            <person name="Rabbinowitsch E."/>
            <person name="Walker D."/>
            <person name="White B."/>
            <person name="Whitehead S."/>
            <person name="Small P.L."/>
            <person name="Brosch R."/>
            <person name="Ramakrishnan L."/>
            <person name="Fischbach M.A."/>
            <person name="Parkhill J."/>
            <person name="Cole S.T."/>
        </authorList>
    </citation>
    <scope>NUCLEOTIDE SEQUENCE [LARGE SCALE GENOMIC DNA]</scope>
    <source>
        <strain>ATCC BAA-535 / M</strain>
    </source>
</reference>
<dbReference type="EC" id="4.1.99.17" evidence="1"/>
<dbReference type="EMBL" id="CP000854">
    <property type="protein sequence ID" value="ACC39195.1"/>
    <property type="molecule type" value="Genomic_DNA"/>
</dbReference>
<dbReference type="RefSeq" id="WP_012392684.1">
    <property type="nucleotide sequence ID" value="NC_010612.1"/>
</dbReference>
<dbReference type="SMR" id="B2HQM5"/>
<dbReference type="STRING" id="216594.MMAR_0735"/>
<dbReference type="GeneID" id="34341651"/>
<dbReference type="GeneID" id="93438900"/>
<dbReference type="KEGG" id="mmi:MMAR_0735"/>
<dbReference type="eggNOG" id="COG0422">
    <property type="taxonomic scope" value="Bacteria"/>
</dbReference>
<dbReference type="HOGENOM" id="CLU_013181_2_1_11"/>
<dbReference type="OrthoDB" id="9805897at2"/>
<dbReference type="UniPathway" id="UPA00060"/>
<dbReference type="Proteomes" id="UP000001190">
    <property type="component" value="Chromosome"/>
</dbReference>
<dbReference type="GO" id="GO:0005829">
    <property type="term" value="C:cytosol"/>
    <property type="evidence" value="ECO:0007669"/>
    <property type="project" value="TreeGrafter"/>
</dbReference>
<dbReference type="GO" id="GO:0051539">
    <property type="term" value="F:4 iron, 4 sulfur cluster binding"/>
    <property type="evidence" value="ECO:0007669"/>
    <property type="project" value="UniProtKB-KW"/>
</dbReference>
<dbReference type="GO" id="GO:0016830">
    <property type="term" value="F:carbon-carbon lyase activity"/>
    <property type="evidence" value="ECO:0007669"/>
    <property type="project" value="InterPro"/>
</dbReference>
<dbReference type="GO" id="GO:0008270">
    <property type="term" value="F:zinc ion binding"/>
    <property type="evidence" value="ECO:0007669"/>
    <property type="project" value="UniProtKB-UniRule"/>
</dbReference>
<dbReference type="GO" id="GO:0009228">
    <property type="term" value="P:thiamine biosynthetic process"/>
    <property type="evidence" value="ECO:0007669"/>
    <property type="project" value="UniProtKB-KW"/>
</dbReference>
<dbReference type="GO" id="GO:0009229">
    <property type="term" value="P:thiamine diphosphate biosynthetic process"/>
    <property type="evidence" value="ECO:0007669"/>
    <property type="project" value="UniProtKB-UniRule"/>
</dbReference>
<dbReference type="FunFam" id="3.20.20.540:FF:000001">
    <property type="entry name" value="Phosphomethylpyrimidine synthase"/>
    <property type="match status" value="1"/>
</dbReference>
<dbReference type="Gene3D" id="6.10.250.620">
    <property type="match status" value="1"/>
</dbReference>
<dbReference type="Gene3D" id="3.20.20.540">
    <property type="entry name" value="Radical SAM ThiC family, central domain"/>
    <property type="match status" value="1"/>
</dbReference>
<dbReference type="HAMAP" id="MF_00089">
    <property type="entry name" value="ThiC"/>
    <property type="match status" value="1"/>
</dbReference>
<dbReference type="InterPro" id="IPR037509">
    <property type="entry name" value="ThiC"/>
</dbReference>
<dbReference type="InterPro" id="IPR025747">
    <property type="entry name" value="ThiC-associated_dom"/>
</dbReference>
<dbReference type="InterPro" id="IPR038521">
    <property type="entry name" value="ThiC/Bza_core_dom"/>
</dbReference>
<dbReference type="InterPro" id="IPR002817">
    <property type="entry name" value="ThiC/BzaA/B"/>
</dbReference>
<dbReference type="NCBIfam" id="NF006763">
    <property type="entry name" value="PRK09284.1"/>
    <property type="match status" value="1"/>
</dbReference>
<dbReference type="NCBIfam" id="NF009895">
    <property type="entry name" value="PRK13352.1"/>
    <property type="match status" value="1"/>
</dbReference>
<dbReference type="NCBIfam" id="TIGR00190">
    <property type="entry name" value="thiC"/>
    <property type="match status" value="1"/>
</dbReference>
<dbReference type="PANTHER" id="PTHR30557:SF1">
    <property type="entry name" value="PHOSPHOMETHYLPYRIMIDINE SYNTHASE, CHLOROPLASTIC"/>
    <property type="match status" value="1"/>
</dbReference>
<dbReference type="PANTHER" id="PTHR30557">
    <property type="entry name" value="THIAMINE BIOSYNTHESIS PROTEIN THIC"/>
    <property type="match status" value="1"/>
</dbReference>
<dbReference type="Pfam" id="PF13667">
    <property type="entry name" value="ThiC-associated"/>
    <property type="match status" value="1"/>
</dbReference>
<dbReference type="Pfam" id="PF01964">
    <property type="entry name" value="ThiC_Rad_SAM"/>
    <property type="match status" value="1"/>
</dbReference>
<dbReference type="SFLD" id="SFLDF00407">
    <property type="entry name" value="phosphomethylpyrimidine_syntha"/>
    <property type="match status" value="1"/>
</dbReference>
<dbReference type="SFLD" id="SFLDG01114">
    <property type="entry name" value="phosphomethylpyrimidine_syntha"/>
    <property type="match status" value="1"/>
</dbReference>
<dbReference type="SFLD" id="SFLDS00113">
    <property type="entry name" value="Radical_SAM_Phosphomethylpyrim"/>
    <property type="match status" value="1"/>
</dbReference>